<proteinExistence type="inferred from homology"/>
<accession>Q0BX67</accession>
<comment type="function">
    <text evidence="1">Catalyzes the oxidation of 5,10-methylenetetrahydrofolate to 5,10-methenyltetrahydrofolate and then the hydrolysis of 5,10-methenyltetrahydrofolate to 10-formyltetrahydrofolate.</text>
</comment>
<comment type="catalytic activity">
    <reaction evidence="1">
        <text>(6R)-5,10-methylene-5,6,7,8-tetrahydrofolate + NADP(+) = (6R)-5,10-methenyltetrahydrofolate + NADPH</text>
        <dbReference type="Rhea" id="RHEA:22812"/>
        <dbReference type="ChEBI" id="CHEBI:15636"/>
        <dbReference type="ChEBI" id="CHEBI:57455"/>
        <dbReference type="ChEBI" id="CHEBI:57783"/>
        <dbReference type="ChEBI" id="CHEBI:58349"/>
        <dbReference type="EC" id="1.5.1.5"/>
    </reaction>
</comment>
<comment type="catalytic activity">
    <reaction evidence="1">
        <text>(6R)-5,10-methenyltetrahydrofolate + H2O = (6R)-10-formyltetrahydrofolate + H(+)</text>
        <dbReference type="Rhea" id="RHEA:23700"/>
        <dbReference type="ChEBI" id="CHEBI:15377"/>
        <dbReference type="ChEBI" id="CHEBI:15378"/>
        <dbReference type="ChEBI" id="CHEBI:57455"/>
        <dbReference type="ChEBI" id="CHEBI:195366"/>
        <dbReference type="EC" id="3.5.4.9"/>
    </reaction>
</comment>
<comment type="pathway">
    <text evidence="1">One-carbon metabolism; tetrahydrofolate interconversion.</text>
</comment>
<comment type="subunit">
    <text evidence="1">Homodimer.</text>
</comment>
<comment type="similarity">
    <text evidence="1">Belongs to the tetrahydrofolate dehydrogenase/cyclohydrolase family.</text>
</comment>
<sequence length="295" mass="30436">MTATRLDGNAVAADVRSAVAAAVSALPGQPCLAVVLVGEDPASEVYVRNKVKMTEAAGMVSIHHRLPADTGQAEVERLIESLNADPEVDGILLQLPLPKGLDADAAIEKINPDKDVDGLTEVSAGRLSLGKPGLRPCTPVGSVILAKRALGPDLSGKNVVVIGRSILVGKPAALLFLAENCTVTIAHSKTADLANVCRSADILVPAVGRPEMVRGDWVKPGAAVIDVGINRIPAPEKGEGKTRLVGDAHYESCAEVAGFITPVPGGVGPMTIACLLRNTVLAACARRGWTVPEGL</sequence>
<keyword id="KW-0028">Amino-acid biosynthesis</keyword>
<keyword id="KW-0368">Histidine biosynthesis</keyword>
<keyword id="KW-0378">Hydrolase</keyword>
<keyword id="KW-0486">Methionine biosynthesis</keyword>
<keyword id="KW-0511">Multifunctional enzyme</keyword>
<keyword id="KW-0521">NADP</keyword>
<keyword id="KW-0554">One-carbon metabolism</keyword>
<keyword id="KW-0560">Oxidoreductase</keyword>
<keyword id="KW-0658">Purine biosynthesis</keyword>
<keyword id="KW-1185">Reference proteome</keyword>
<organism>
    <name type="scientific">Hyphomonas neptunium (strain ATCC 15444)</name>
    <dbReference type="NCBI Taxonomy" id="228405"/>
    <lineage>
        <taxon>Bacteria</taxon>
        <taxon>Pseudomonadati</taxon>
        <taxon>Pseudomonadota</taxon>
        <taxon>Alphaproteobacteria</taxon>
        <taxon>Hyphomonadales</taxon>
        <taxon>Hyphomonadaceae</taxon>
        <taxon>Hyphomonas</taxon>
    </lineage>
</organism>
<gene>
    <name evidence="1" type="primary">folD</name>
    <name type="ordered locus">HNE_3253</name>
</gene>
<reference key="1">
    <citation type="journal article" date="2006" name="J. Bacteriol.">
        <title>Comparative genomic evidence for a close relationship between the dimorphic prosthecate bacteria Hyphomonas neptunium and Caulobacter crescentus.</title>
        <authorList>
            <person name="Badger J.H."/>
            <person name="Hoover T.R."/>
            <person name="Brun Y.V."/>
            <person name="Weiner R.M."/>
            <person name="Laub M.T."/>
            <person name="Alexandre G."/>
            <person name="Mrazek J."/>
            <person name="Ren Q."/>
            <person name="Paulsen I.T."/>
            <person name="Nelson K.E."/>
            <person name="Khouri H.M."/>
            <person name="Radune D."/>
            <person name="Sosa J."/>
            <person name="Dodson R.J."/>
            <person name="Sullivan S.A."/>
            <person name="Rosovitz M.J."/>
            <person name="Madupu R."/>
            <person name="Brinkac L.M."/>
            <person name="Durkin A.S."/>
            <person name="Daugherty S.C."/>
            <person name="Kothari S.P."/>
            <person name="Giglio M.G."/>
            <person name="Zhou L."/>
            <person name="Haft D.H."/>
            <person name="Selengut J.D."/>
            <person name="Davidsen T.M."/>
            <person name="Yang Q."/>
            <person name="Zafar N."/>
            <person name="Ward N.L."/>
        </authorList>
    </citation>
    <scope>NUCLEOTIDE SEQUENCE [LARGE SCALE GENOMIC DNA]</scope>
    <source>
        <strain>ATCC 15444</strain>
    </source>
</reference>
<dbReference type="EC" id="1.5.1.5" evidence="1"/>
<dbReference type="EC" id="3.5.4.9" evidence="1"/>
<dbReference type="EMBL" id="CP000158">
    <property type="protein sequence ID" value="ABI77382.1"/>
    <property type="molecule type" value="Genomic_DNA"/>
</dbReference>
<dbReference type="RefSeq" id="WP_011648221.1">
    <property type="nucleotide sequence ID" value="NC_008358.1"/>
</dbReference>
<dbReference type="SMR" id="Q0BX67"/>
<dbReference type="STRING" id="228405.HNE_3253"/>
<dbReference type="KEGG" id="hne:HNE_3253"/>
<dbReference type="eggNOG" id="COG0190">
    <property type="taxonomic scope" value="Bacteria"/>
</dbReference>
<dbReference type="HOGENOM" id="CLU_034045_1_2_5"/>
<dbReference type="UniPathway" id="UPA00193"/>
<dbReference type="Proteomes" id="UP000001959">
    <property type="component" value="Chromosome"/>
</dbReference>
<dbReference type="GO" id="GO:0005829">
    <property type="term" value="C:cytosol"/>
    <property type="evidence" value="ECO:0007669"/>
    <property type="project" value="TreeGrafter"/>
</dbReference>
<dbReference type="GO" id="GO:0004477">
    <property type="term" value="F:methenyltetrahydrofolate cyclohydrolase activity"/>
    <property type="evidence" value="ECO:0007669"/>
    <property type="project" value="UniProtKB-UniRule"/>
</dbReference>
<dbReference type="GO" id="GO:0004488">
    <property type="term" value="F:methylenetetrahydrofolate dehydrogenase (NADP+) activity"/>
    <property type="evidence" value="ECO:0007669"/>
    <property type="project" value="UniProtKB-UniRule"/>
</dbReference>
<dbReference type="GO" id="GO:0000105">
    <property type="term" value="P:L-histidine biosynthetic process"/>
    <property type="evidence" value="ECO:0007669"/>
    <property type="project" value="UniProtKB-KW"/>
</dbReference>
<dbReference type="GO" id="GO:0009086">
    <property type="term" value="P:methionine biosynthetic process"/>
    <property type="evidence" value="ECO:0007669"/>
    <property type="project" value="UniProtKB-KW"/>
</dbReference>
<dbReference type="GO" id="GO:0006164">
    <property type="term" value="P:purine nucleotide biosynthetic process"/>
    <property type="evidence" value="ECO:0007669"/>
    <property type="project" value="UniProtKB-KW"/>
</dbReference>
<dbReference type="GO" id="GO:0035999">
    <property type="term" value="P:tetrahydrofolate interconversion"/>
    <property type="evidence" value="ECO:0007669"/>
    <property type="project" value="UniProtKB-UniRule"/>
</dbReference>
<dbReference type="CDD" id="cd01080">
    <property type="entry name" value="NAD_bind_m-THF_DH_Cyclohyd"/>
    <property type="match status" value="1"/>
</dbReference>
<dbReference type="FunFam" id="3.40.50.720:FF:000006">
    <property type="entry name" value="Bifunctional protein FolD"/>
    <property type="match status" value="1"/>
</dbReference>
<dbReference type="FunFam" id="3.40.50.10860:FF:000005">
    <property type="entry name" value="C-1-tetrahydrofolate synthase, cytoplasmic, putative"/>
    <property type="match status" value="1"/>
</dbReference>
<dbReference type="Gene3D" id="3.40.50.10860">
    <property type="entry name" value="Leucine Dehydrogenase, chain A, domain 1"/>
    <property type="match status" value="1"/>
</dbReference>
<dbReference type="Gene3D" id="3.40.50.720">
    <property type="entry name" value="NAD(P)-binding Rossmann-like Domain"/>
    <property type="match status" value="1"/>
</dbReference>
<dbReference type="HAMAP" id="MF_01576">
    <property type="entry name" value="THF_DHG_CYH"/>
    <property type="match status" value="1"/>
</dbReference>
<dbReference type="InterPro" id="IPR046346">
    <property type="entry name" value="Aminoacid_DH-like_N_sf"/>
</dbReference>
<dbReference type="InterPro" id="IPR036291">
    <property type="entry name" value="NAD(P)-bd_dom_sf"/>
</dbReference>
<dbReference type="InterPro" id="IPR000672">
    <property type="entry name" value="THF_DH/CycHdrlase"/>
</dbReference>
<dbReference type="InterPro" id="IPR020630">
    <property type="entry name" value="THF_DH/CycHdrlase_cat_dom"/>
</dbReference>
<dbReference type="InterPro" id="IPR020867">
    <property type="entry name" value="THF_DH/CycHdrlase_CS"/>
</dbReference>
<dbReference type="InterPro" id="IPR020631">
    <property type="entry name" value="THF_DH/CycHdrlase_NAD-bd_dom"/>
</dbReference>
<dbReference type="NCBIfam" id="NF010783">
    <property type="entry name" value="PRK14186.1"/>
    <property type="match status" value="1"/>
</dbReference>
<dbReference type="NCBIfam" id="NF010785">
    <property type="entry name" value="PRK14188.1"/>
    <property type="match status" value="1"/>
</dbReference>
<dbReference type="PANTHER" id="PTHR48099:SF5">
    <property type="entry name" value="C-1-TETRAHYDROFOLATE SYNTHASE, CYTOPLASMIC"/>
    <property type="match status" value="1"/>
</dbReference>
<dbReference type="PANTHER" id="PTHR48099">
    <property type="entry name" value="C-1-TETRAHYDROFOLATE SYNTHASE, CYTOPLASMIC-RELATED"/>
    <property type="match status" value="1"/>
</dbReference>
<dbReference type="Pfam" id="PF00763">
    <property type="entry name" value="THF_DHG_CYH"/>
    <property type="match status" value="1"/>
</dbReference>
<dbReference type="Pfam" id="PF02882">
    <property type="entry name" value="THF_DHG_CYH_C"/>
    <property type="match status" value="1"/>
</dbReference>
<dbReference type="PRINTS" id="PR00085">
    <property type="entry name" value="THFDHDRGNASE"/>
</dbReference>
<dbReference type="SUPFAM" id="SSF53223">
    <property type="entry name" value="Aminoacid dehydrogenase-like, N-terminal domain"/>
    <property type="match status" value="1"/>
</dbReference>
<dbReference type="SUPFAM" id="SSF51735">
    <property type="entry name" value="NAD(P)-binding Rossmann-fold domains"/>
    <property type="match status" value="1"/>
</dbReference>
<dbReference type="PROSITE" id="PS00767">
    <property type="entry name" value="THF_DHG_CYH_2"/>
    <property type="match status" value="1"/>
</dbReference>
<evidence type="ECO:0000255" key="1">
    <source>
        <dbReference type="HAMAP-Rule" id="MF_01576"/>
    </source>
</evidence>
<protein>
    <recommendedName>
        <fullName evidence="1">Bifunctional protein FolD</fullName>
    </recommendedName>
    <domain>
        <recommendedName>
            <fullName evidence="1">Methylenetetrahydrofolate dehydrogenase</fullName>
            <ecNumber evidence="1">1.5.1.5</ecNumber>
        </recommendedName>
    </domain>
    <domain>
        <recommendedName>
            <fullName evidence="1">Methenyltetrahydrofolate cyclohydrolase</fullName>
            <ecNumber evidence="1">3.5.4.9</ecNumber>
        </recommendedName>
    </domain>
</protein>
<name>FOLD_HYPNA</name>
<feature type="chain" id="PRO_0000268370" description="Bifunctional protein FolD">
    <location>
        <begin position="1"/>
        <end position="295"/>
    </location>
</feature>
<feature type="binding site" evidence="1">
    <location>
        <begin position="163"/>
        <end position="165"/>
    </location>
    <ligand>
        <name>NADP(+)</name>
        <dbReference type="ChEBI" id="CHEBI:58349"/>
    </ligand>
</feature>
<feature type="binding site" evidence="1">
    <location>
        <position position="188"/>
    </location>
    <ligand>
        <name>NADP(+)</name>
        <dbReference type="ChEBI" id="CHEBI:58349"/>
    </ligand>
</feature>
<feature type="binding site" evidence="1">
    <location>
        <position position="229"/>
    </location>
    <ligand>
        <name>NADP(+)</name>
        <dbReference type="ChEBI" id="CHEBI:58349"/>
    </ligand>
</feature>